<sequence length="559" mass="61233">MAAAKKAVLGPLVGAVDQGTSSTRFLVFNSKTAELLSHHQVEIKQEFPREGWVEQDPKEILQSVYECIEKTCEKLGQLNIDISNIKAIGVSNQRETTVVWDKLTGEPLYNAVVWLDLRTQSTVEKLSKRIPGNNNFVKSKTGLPLSTYFSAVKLRWLLDNVKKVQEAVEENRALFGTIDSWLIWSLTGGINGGVHCTDVTNASRTMLFNIHSLEWDKELCEFFGIPMEILPNVRSSSEIYGLMKISHSLKAGALEGVPISGCLGDQSAALVGQMCFQDGQAKNTYGTGCFLLCNTGHKCVFSEHGLLTTVAYKLGRDKPVYYALEGSVAIAGAVIRWLRDNLGIIKSSEEIEKLAKEVGTSYGCYFVPAFSGLYAPYWEPSARGIICGLTQFTNKCHIAFAALEAVCFQTREILDAMNRDCGIPLSHLQVDGGMTSNKILMQLQADILYIPVVKPSMPETTALGAAMAAGAAEGVGVWSLEPEDLSAVTMERFEPQINAEESEIRYSTWKKAVMKSIGWVTTQSPESGDPSIFCSLPLGFFIVSSMVMLIGARYISGIP</sequence>
<gene>
    <name evidence="7" type="primary">Gk</name>
    <name type="synonym">Gyk</name>
</gene>
<keyword id="KW-0025">Alternative splicing</keyword>
<keyword id="KW-0067">ATP-binding</keyword>
<keyword id="KW-0963">Cytoplasm</keyword>
<keyword id="KW-0319">Glycerol metabolism</keyword>
<keyword id="KW-0418">Kinase</keyword>
<keyword id="KW-0472">Membrane</keyword>
<keyword id="KW-0479">Metal-binding</keyword>
<keyword id="KW-0496">Mitochondrion</keyword>
<keyword id="KW-1000">Mitochondrion outer membrane</keyword>
<keyword id="KW-0547">Nucleotide-binding</keyword>
<keyword id="KW-0539">Nucleus</keyword>
<keyword id="KW-1185">Reference proteome</keyword>
<keyword id="KW-0808">Transferase</keyword>
<keyword id="KW-0812">Transmembrane</keyword>
<keyword id="KW-1133">Transmembrane helix</keyword>
<keyword id="KW-0862">Zinc</keyword>
<dbReference type="EC" id="2.7.1.30" evidence="2"/>
<dbReference type="EMBL" id="D16102">
    <property type="protein sequence ID" value="BAA03677.1"/>
    <property type="molecule type" value="mRNA"/>
</dbReference>
<dbReference type="EMBL" id="AABR07038533">
    <property type="status" value="NOT_ANNOTATED_CDS"/>
    <property type="molecule type" value="Genomic_DNA"/>
</dbReference>
<dbReference type="PIR" id="JN0606">
    <property type="entry name" value="JN0606"/>
</dbReference>
<dbReference type="RefSeq" id="NP_077357.2">
    <molecule id="Q63060-2"/>
    <property type="nucleotide sequence ID" value="NM_024381.2"/>
</dbReference>
<dbReference type="RefSeq" id="XP_006257049.1">
    <molecule id="Q63060-1"/>
    <property type="nucleotide sequence ID" value="XM_006256987.5"/>
</dbReference>
<dbReference type="SMR" id="Q63060"/>
<dbReference type="BioGRID" id="249431">
    <property type="interactions" value="1"/>
</dbReference>
<dbReference type="FunCoup" id="Q63060">
    <property type="interactions" value="1300"/>
</dbReference>
<dbReference type="STRING" id="10116.ENSRNOP00000074103"/>
<dbReference type="iPTMnet" id="Q63060"/>
<dbReference type="PhosphoSitePlus" id="Q63060"/>
<dbReference type="SwissPalm" id="Q63060"/>
<dbReference type="PaxDb" id="10116-ENSRNOP00000059825"/>
<dbReference type="Ensembl" id="ENSRNOT00000087547.2">
    <molecule id="Q63060-1"/>
    <property type="protein sequence ID" value="ENSRNOP00000074103.1"/>
    <property type="gene ID" value="ENSRNOG00000034116.7"/>
</dbReference>
<dbReference type="GeneID" id="79223"/>
<dbReference type="KEGG" id="rno:79223"/>
<dbReference type="AGR" id="RGD:70893"/>
<dbReference type="CTD" id="2710"/>
<dbReference type="RGD" id="70893">
    <property type="gene designation" value="Gk"/>
</dbReference>
<dbReference type="eggNOG" id="KOG2517">
    <property type="taxonomic scope" value="Eukaryota"/>
</dbReference>
<dbReference type="GeneTree" id="ENSGT01000000214434"/>
<dbReference type="InParanoid" id="Q63060"/>
<dbReference type="OMA" id="FMLMNIG"/>
<dbReference type="OrthoDB" id="5422795at2759"/>
<dbReference type="Reactome" id="R-RNO-75109">
    <property type="pathway name" value="Triglyceride biosynthesis"/>
</dbReference>
<dbReference type="UniPathway" id="UPA00618">
    <property type="reaction ID" value="UER00672"/>
</dbReference>
<dbReference type="PRO" id="PR:Q63060"/>
<dbReference type="Proteomes" id="UP000002494">
    <property type="component" value="Chromosome X"/>
</dbReference>
<dbReference type="Bgee" id="ENSRNOG00000034116">
    <property type="expression patterns" value="Expressed in liver and 18 other cell types or tissues"/>
</dbReference>
<dbReference type="GO" id="GO:0005829">
    <property type="term" value="C:cytosol"/>
    <property type="evidence" value="ECO:0000250"/>
    <property type="project" value="UniProtKB"/>
</dbReference>
<dbReference type="GO" id="GO:0005741">
    <property type="term" value="C:mitochondrial outer membrane"/>
    <property type="evidence" value="ECO:0007669"/>
    <property type="project" value="UniProtKB-SubCell"/>
</dbReference>
<dbReference type="GO" id="GO:0005739">
    <property type="term" value="C:mitochondrion"/>
    <property type="evidence" value="ECO:0000250"/>
    <property type="project" value="UniProtKB"/>
</dbReference>
<dbReference type="GO" id="GO:0005634">
    <property type="term" value="C:nucleus"/>
    <property type="evidence" value="ECO:0000250"/>
    <property type="project" value="UniProtKB"/>
</dbReference>
<dbReference type="GO" id="GO:0005524">
    <property type="term" value="F:ATP binding"/>
    <property type="evidence" value="ECO:0007669"/>
    <property type="project" value="UniProtKB-KW"/>
</dbReference>
<dbReference type="GO" id="GO:0004370">
    <property type="term" value="F:glycerol kinase activity"/>
    <property type="evidence" value="ECO:0000250"/>
    <property type="project" value="UniProtKB"/>
</dbReference>
<dbReference type="GO" id="GO:0042393">
    <property type="term" value="F:histone binding"/>
    <property type="evidence" value="ECO:0000314"/>
    <property type="project" value="RGD"/>
</dbReference>
<dbReference type="GO" id="GO:0046872">
    <property type="term" value="F:metal ion binding"/>
    <property type="evidence" value="ECO:0007669"/>
    <property type="project" value="UniProtKB-KW"/>
</dbReference>
<dbReference type="GO" id="GO:0042593">
    <property type="term" value="P:glucose homeostasis"/>
    <property type="evidence" value="ECO:0000266"/>
    <property type="project" value="RGD"/>
</dbReference>
<dbReference type="GO" id="GO:0019563">
    <property type="term" value="P:glycerol catabolic process"/>
    <property type="evidence" value="ECO:0007669"/>
    <property type="project" value="UniProtKB-UniPathway"/>
</dbReference>
<dbReference type="GO" id="GO:0006071">
    <property type="term" value="P:glycerol metabolic process"/>
    <property type="evidence" value="ECO:0000266"/>
    <property type="project" value="RGD"/>
</dbReference>
<dbReference type="GO" id="GO:0046167">
    <property type="term" value="P:glycerol-3-phosphate biosynthetic process"/>
    <property type="evidence" value="ECO:0000250"/>
    <property type="project" value="UniProtKB"/>
</dbReference>
<dbReference type="GO" id="GO:0019217">
    <property type="term" value="P:regulation of fatty acid metabolic process"/>
    <property type="evidence" value="ECO:0000266"/>
    <property type="project" value="RGD"/>
</dbReference>
<dbReference type="GO" id="GO:0045471">
    <property type="term" value="P:response to ethanol"/>
    <property type="evidence" value="ECO:0000314"/>
    <property type="project" value="RGD"/>
</dbReference>
<dbReference type="GO" id="GO:0071873">
    <property type="term" value="P:response to norepinephrine"/>
    <property type="evidence" value="ECO:0000270"/>
    <property type="project" value="RGD"/>
</dbReference>
<dbReference type="GO" id="GO:0009410">
    <property type="term" value="P:response to xenobiotic stimulus"/>
    <property type="evidence" value="ECO:0000270"/>
    <property type="project" value="RGD"/>
</dbReference>
<dbReference type="GO" id="GO:0019432">
    <property type="term" value="P:triglyceride biosynthetic process"/>
    <property type="evidence" value="ECO:0000266"/>
    <property type="project" value="RGD"/>
</dbReference>
<dbReference type="GO" id="GO:0006641">
    <property type="term" value="P:triglyceride metabolic process"/>
    <property type="evidence" value="ECO:0000266"/>
    <property type="project" value="RGD"/>
</dbReference>
<dbReference type="CDD" id="cd07792">
    <property type="entry name" value="ASKHA_NBD_FGGY_GK1-3-like"/>
    <property type="match status" value="1"/>
</dbReference>
<dbReference type="FunFam" id="3.30.420.40:FF:000043">
    <property type="entry name" value="glycerol kinase isoform X1"/>
    <property type="match status" value="1"/>
</dbReference>
<dbReference type="FunFam" id="3.30.420.40:FF:000033">
    <property type="entry name" value="glycerol kinase isoform X2"/>
    <property type="match status" value="1"/>
</dbReference>
<dbReference type="Gene3D" id="3.30.420.40">
    <property type="match status" value="2"/>
</dbReference>
<dbReference type="InterPro" id="IPR043129">
    <property type="entry name" value="ATPase_NBD"/>
</dbReference>
<dbReference type="InterPro" id="IPR000577">
    <property type="entry name" value="Carb_kinase_FGGY"/>
</dbReference>
<dbReference type="InterPro" id="IPR018483">
    <property type="entry name" value="Carb_kinase_FGGY_CS"/>
</dbReference>
<dbReference type="InterPro" id="IPR018485">
    <property type="entry name" value="FGGY_C"/>
</dbReference>
<dbReference type="InterPro" id="IPR018484">
    <property type="entry name" value="FGGY_N"/>
</dbReference>
<dbReference type="InterPro" id="IPR042018">
    <property type="entry name" value="GK1-3_metazoan-type"/>
</dbReference>
<dbReference type="InterPro" id="IPR005999">
    <property type="entry name" value="Glycerol_kin"/>
</dbReference>
<dbReference type="NCBIfam" id="TIGR01311">
    <property type="entry name" value="glycerol_kin"/>
    <property type="match status" value="1"/>
</dbReference>
<dbReference type="NCBIfam" id="NF000756">
    <property type="entry name" value="PRK00047.1"/>
    <property type="match status" value="1"/>
</dbReference>
<dbReference type="PANTHER" id="PTHR10196:SF56">
    <property type="entry name" value="GLYCEROL KINASE"/>
    <property type="match status" value="1"/>
</dbReference>
<dbReference type="PANTHER" id="PTHR10196">
    <property type="entry name" value="SUGAR KINASE"/>
    <property type="match status" value="1"/>
</dbReference>
<dbReference type="Pfam" id="PF02782">
    <property type="entry name" value="FGGY_C"/>
    <property type="match status" value="1"/>
</dbReference>
<dbReference type="Pfam" id="PF00370">
    <property type="entry name" value="FGGY_N"/>
    <property type="match status" value="1"/>
</dbReference>
<dbReference type="PIRSF" id="PIRSF000538">
    <property type="entry name" value="GlpK"/>
    <property type="match status" value="1"/>
</dbReference>
<dbReference type="SUPFAM" id="SSF53067">
    <property type="entry name" value="Actin-like ATPase domain"/>
    <property type="match status" value="2"/>
</dbReference>
<dbReference type="PROSITE" id="PS00933">
    <property type="entry name" value="FGGY_KINASES_1"/>
    <property type="match status" value="1"/>
</dbReference>
<dbReference type="PROSITE" id="PS00445">
    <property type="entry name" value="FGGY_KINASES_2"/>
    <property type="match status" value="1"/>
</dbReference>
<feature type="chain" id="PRO_0000059539" description="Glycerol kinase">
    <location>
        <begin position="1"/>
        <end position="559"/>
    </location>
</feature>
<feature type="transmembrane region" description="Helical" evidence="3">
    <location>
        <begin position="532"/>
        <end position="552"/>
    </location>
</feature>
<feature type="binding site" evidence="1">
    <location>
        <position position="20"/>
    </location>
    <ligand>
        <name>ADP</name>
        <dbReference type="ChEBI" id="CHEBI:456216"/>
    </ligand>
</feature>
<feature type="binding site" evidence="1">
    <location>
        <position position="20"/>
    </location>
    <ligand>
        <name>ATP</name>
        <dbReference type="ChEBI" id="CHEBI:30616"/>
    </ligand>
</feature>
<feature type="binding site" evidence="1">
    <location>
        <position position="20"/>
    </location>
    <ligand>
        <name>sn-glycerol 3-phosphate</name>
        <dbReference type="ChEBI" id="CHEBI:57597"/>
    </ligand>
</feature>
<feature type="binding site" evidence="1">
    <location>
        <position position="21"/>
    </location>
    <ligand>
        <name>ATP</name>
        <dbReference type="ChEBI" id="CHEBI:30616"/>
    </ligand>
</feature>
<feature type="binding site" evidence="1">
    <location>
        <position position="22"/>
    </location>
    <ligand>
        <name>ATP</name>
        <dbReference type="ChEBI" id="CHEBI:30616"/>
    </ligand>
</feature>
<feature type="binding site" evidence="1">
    <location>
        <position position="24"/>
    </location>
    <ligand>
        <name>ADP</name>
        <dbReference type="ChEBI" id="CHEBI:456216"/>
    </ligand>
</feature>
<feature type="binding site" evidence="1">
    <location>
        <position position="94"/>
    </location>
    <ligand>
        <name>glycerol</name>
        <dbReference type="ChEBI" id="CHEBI:17754"/>
    </ligand>
</feature>
<feature type="binding site" evidence="1">
    <location>
        <position position="94"/>
    </location>
    <ligand>
        <name>sn-glycerol 3-phosphate</name>
        <dbReference type="ChEBI" id="CHEBI:57597"/>
    </ligand>
</feature>
<feature type="binding site" evidence="1">
    <location>
        <position position="95"/>
    </location>
    <ligand>
        <name>glycerol</name>
        <dbReference type="ChEBI" id="CHEBI:17754"/>
    </ligand>
</feature>
<feature type="binding site" evidence="1">
    <location>
        <position position="95"/>
    </location>
    <ligand>
        <name>sn-glycerol 3-phosphate</name>
        <dbReference type="ChEBI" id="CHEBI:57597"/>
    </ligand>
</feature>
<feature type="binding site" evidence="1">
    <location>
        <position position="148"/>
    </location>
    <ligand>
        <name>glycerol</name>
        <dbReference type="ChEBI" id="CHEBI:17754"/>
    </ligand>
</feature>
<feature type="binding site" evidence="1">
    <location>
        <position position="148"/>
    </location>
    <ligand>
        <name>sn-glycerol 3-phosphate</name>
        <dbReference type="ChEBI" id="CHEBI:57597"/>
    </ligand>
</feature>
<feature type="binding site" evidence="1">
    <location>
        <position position="252"/>
    </location>
    <ligand>
        <name>beta-D-fructose 1,6-bisphosphate</name>
        <dbReference type="ChEBI" id="CHEBI:32966"/>
        <note>allosteric inhibitor</note>
    </ligand>
</feature>
<feature type="binding site" evidence="1">
    <location>
        <position position="265"/>
    </location>
    <ligand>
        <name>glycerol</name>
        <dbReference type="ChEBI" id="CHEBI:17754"/>
    </ligand>
</feature>
<feature type="binding site" evidence="1">
    <location>
        <position position="265"/>
    </location>
    <ligand>
        <name>sn-glycerol 3-phosphate</name>
        <dbReference type="ChEBI" id="CHEBI:57597"/>
    </ligand>
</feature>
<feature type="binding site" evidence="1">
    <location>
        <position position="266"/>
    </location>
    <ligand>
        <name>glycerol</name>
        <dbReference type="ChEBI" id="CHEBI:17754"/>
    </ligand>
</feature>
<feature type="binding site" evidence="1">
    <location>
        <position position="287"/>
    </location>
    <ligand>
        <name>ADP</name>
        <dbReference type="ChEBI" id="CHEBI:456216"/>
    </ligand>
</feature>
<feature type="binding site" evidence="1">
    <location>
        <position position="287"/>
    </location>
    <ligand>
        <name>ATP</name>
        <dbReference type="ChEBI" id="CHEBI:30616"/>
    </ligand>
</feature>
<feature type="binding site" evidence="1">
    <location>
        <position position="332"/>
    </location>
    <ligand>
        <name>ADP</name>
        <dbReference type="ChEBI" id="CHEBI:456216"/>
    </ligand>
</feature>
<feature type="binding site" evidence="1">
    <location>
        <position position="332"/>
    </location>
    <ligand>
        <name>ATP</name>
        <dbReference type="ChEBI" id="CHEBI:30616"/>
    </ligand>
</feature>
<feature type="binding site" evidence="1">
    <location>
        <position position="433"/>
    </location>
    <ligand>
        <name>ADP</name>
        <dbReference type="ChEBI" id="CHEBI:456216"/>
    </ligand>
</feature>
<feature type="binding site" evidence="1">
    <location>
        <position position="433"/>
    </location>
    <ligand>
        <name>ATP</name>
        <dbReference type="ChEBI" id="CHEBI:30616"/>
    </ligand>
</feature>
<feature type="binding site" evidence="1">
    <location>
        <position position="437"/>
    </location>
    <ligand>
        <name>ADP</name>
        <dbReference type="ChEBI" id="CHEBI:456216"/>
    </ligand>
</feature>
<feature type="binding site" evidence="1">
    <location>
        <position position="501"/>
    </location>
    <ligand>
        <name>Zn(2+)</name>
        <dbReference type="ChEBI" id="CHEBI:29105"/>
        <note>ligand shared with EIIA-Glc</note>
    </ligand>
</feature>
<feature type="splice variant" id="VSP_062140" description="In isoform 2.">
    <location>
        <begin position="244"/>
        <end position="249"/>
    </location>
</feature>
<feature type="splice variant" id="VSP_062141" description="In isoform 2.">
    <location>
        <begin position="527"/>
        <end position="555"/>
    </location>
</feature>
<feature type="sequence conflict" description="In Ref. 1; BAA03677." evidence="6" ref="1">
    <original>G</original>
    <variation>A</variation>
    <location>
        <position position="372"/>
    </location>
</feature>
<comment type="function">
    <text evidence="2">Kinase that plays a key role in glycerol metabolism, catalyzing its phosphorylation to produce sn-glycerol 3-phosphate. Sn-glycerol 3-phosphate is a crucial intermediate in various metabolic pathways, such as the synthesis of glycerolipids and triglycerides, glycogenesis, glycolysis and gluconeogenesis.</text>
</comment>
<comment type="catalytic activity">
    <reaction evidence="2">
        <text>glycerol + ATP = sn-glycerol 3-phosphate + ADP + H(+)</text>
        <dbReference type="Rhea" id="RHEA:21644"/>
        <dbReference type="ChEBI" id="CHEBI:15378"/>
        <dbReference type="ChEBI" id="CHEBI:17754"/>
        <dbReference type="ChEBI" id="CHEBI:30616"/>
        <dbReference type="ChEBI" id="CHEBI:57597"/>
        <dbReference type="ChEBI" id="CHEBI:456216"/>
        <dbReference type="EC" id="2.7.1.30"/>
    </reaction>
    <physiologicalReaction direction="left-to-right" evidence="2">
        <dbReference type="Rhea" id="RHEA:21645"/>
    </physiologicalReaction>
</comment>
<comment type="pathway">
    <text evidence="2">Polyol metabolism; glycerol degradation via glycerol kinase pathway; sn-glycerol 3-phosphate from glycerol: step 1/1.</text>
</comment>
<comment type="subcellular location">
    <subcellularLocation>
        <location evidence="2">Mitochondrion outer membrane</location>
        <topology evidence="3">Single-pass membrane protein</topology>
    </subcellularLocation>
    <subcellularLocation>
        <location evidence="2">Nucleus</location>
    </subcellularLocation>
    <subcellularLocation>
        <location evidence="2">Cytoplasm</location>
        <location evidence="2">Cytosol</location>
    </subcellularLocation>
    <text evidence="2">Glycerol kinase activity is more cytosolic in some tissues. It probably represents the expression of isoforms lacking a transmembrane domain.</text>
</comment>
<comment type="subcellular location">
    <molecule>Isoform 1</molecule>
    <subcellularLocation>
        <location evidence="2">Mitochondrion outer membrane</location>
        <topology evidence="3">Single-pass membrane protein</topology>
    </subcellularLocation>
    <subcellularLocation>
        <location evidence="2">Nucleus</location>
    </subcellularLocation>
</comment>
<comment type="subcellular location">
    <molecule>Isoform 2</molecule>
    <subcellularLocation>
        <location evidence="2">Cytoplasm</location>
        <location evidence="2">Cytosol</location>
    </subcellularLocation>
</comment>
<comment type="alternative products">
    <event type="alternative splicing"/>
    <isoform>
        <id>Q63060-1</id>
        <name>1</name>
        <sequence type="displayed"/>
    </isoform>
    <isoform>
        <id>Q63060-2</id>
        <name>2</name>
        <sequence type="described" ref="VSP_062140 VSP_062141"/>
    </isoform>
</comment>
<comment type="similarity">
    <text evidence="6">Belongs to the FGGY kinase family.</text>
</comment>
<comment type="caution">
    <text evidence="4">Increases the binding of activated glucocorticoid-receptor to nuclei in the presence of ATP.</text>
</comment>
<name>GLPK_RAT</name>
<reference key="1">
    <citation type="journal article" date="1993" name="Biochem. Biophys. Res. Commun.">
        <title>Molecular cloning of rat liver glucocorticoid-receptor translocation promoter.</title>
        <authorList>
            <person name="Okamoto K."/>
            <person name="Hirano H."/>
            <person name="Isohashi F."/>
        </authorList>
    </citation>
    <scope>NUCLEOTIDE SEQUENCE [MRNA] (ISOFORM 2)</scope>
    <scope>CAUTION</scope>
    <source>
        <strain>Sprague-Dawley</strain>
        <tissue>Liver</tissue>
    </source>
</reference>
<reference key="2">
    <citation type="journal article" date="2004" name="Nature">
        <title>Genome sequence of the Brown Norway rat yields insights into mammalian evolution.</title>
        <authorList>
            <person name="Gibbs R.A."/>
            <person name="Weinstock G.M."/>
            <person name="Metzker M.L."/>
            <person name="Muzny D.M."/>
            <person name="Sodergren E.J."/>
            <person name="Scherer S."/>
            <person name="Scott G."/>
            <person name="Steffen D."/>
            <person name="Worley K.C."/>
            <person name="Burch P.E."/>
            <person name="Okwuonu G."/>
            <person name="Hines S."/>
            <person name="Lewis L."/>
            <person name="Deramo C."/>
            <person name="Delgado O."/>
            <person name="Dugan-Rocha S."/>
            <person name="Miner G."/>
            <person name="Morgan M."/>
            <person name="Hawes A."/>
            <person name="Gill R."/>
            <person name="Holt R.A."/>
            <person name="Adams M.D."/>
            <person name="Amanatides P.G."/>
            <person name="Baden-Tillson H."/>
            <person name="Barnstead M."/>
            <person name="Chin S."/>
            <person name="Evans C.A."/>
            <person name="Ferriera S."/>
            <person name="Fosler C."/>
            <person name="Glodek A."/>
            <person name="Gu Z."/>
            <person name="Jennings D."/>
            <person name="Kraft C.L."/>
            <person name="Nguyen T."/>
            <person name="Pfannkoch C.M."/>
            <person name="Sitter C."/>
            <person name="Sutton G.G."/>
            <person name="Venter J.C."/>
            <person name="Woodage T."/>
            <person name="Smith D."/>
            <person name="Lee H.-M."/>
            <person name="Gustafson E."/>
            <person name="Cahill P."/>
            <person name="Kana A."/>
            <person name="Doucette-Stamm L."/>
            <person name="Weinstock K."/>
            <person name="Fechtel K."/>
            <person name="Weiss R.B."/>
            <person name="Dunn D.M."/>
            <person name="Green E.D."/>
            <person name="Blakesley R.W."/>
            <person name="Bouffard G.G."/>
            <person name="De Jong P.J."/>
            <person name="Osoegawa K."/>
            <person name="Zhu B."/>
            <person name="Marra M."/>
            <person name="Schein J."/>
            <person name="Bosdet I."/>
            <person name="Fjell C."/>
            <person name="Jones S."/>
            <person name="Krzywinski M."/>
            <person name="Mathewson C."/>
            <person name="Siddiqui A."/>
            <person name="Wye N."/>
            <person name="McPherson J."/>
            <person name="Zhao S."/>
            <person name="Fraser C.M."/>
            <person name="Shetty J."/>
            <person name="Shatsman S."/>
            <person name="Geer K."/>
            <person name="Chen Y."/>
            <person name="Abramzon S."/>
            <person name="Nierman W.C."/>
            <person name="Havlak P.H."/>
            <person name="Chen R."/>
            <person name="Durbin K.J."/>
            <person name="Egan A."/>
            <person name="Ren Y."/>
            <person name="Song X.-Z."/>
            <person name="Li B."/>
            <person name="Liu Y."/>
            <person name="Qin X."/>
            <person name="Cawley S."/>
            <person name="Cooney A.J."/>
            <person name="D'Souza L.M."/>
            <person name="Martin K."/>
            <person name="Wu J.Q."/>
            <person name="Gonzalez-Garay M.L."/>
            <person name="Jackson A.R."/>
            <person name="Kalafus K.J."/>
            <person name="McLeod M.P."/>
            <person name="Milosavljevic A."/>
            <person name="Virk D."/>
            <person name="Volkov A."/>
            <person name="Wheeler D.A."/>
            <person name="Zhang Z."/>
            <person name="Bailey J.A."/>
            <person name="Eichler E.E."/>
            <person name="Tuzun E."/>
            <person name="Birney E."/>
            <person name="Mongin E."/>
            <person name="Ureta-Vidal A."/>
            <person name="Woodwark C."/>
            <person name="Zdobnov E."/>
            <person name="Bork P."/>
            <person name="Suyama M."/>
            <person name="Torrents D."/>
            <person name="Alexandersson M."/>
            <person name="Trask B.J."/>
            <person name="Young J.M."/>
            <person name="Huang H."/>
            <person name="Wang H."/>
            <person name="Xing H."/>
            <person name="Daniels S."/>
            <person name="Gietzen D."/>
            <person name="Schmidt J."/>
            <person name="Stevens K."/>
            <person name="Vitt U."/>
            <person name="Wingrove J."/>
            <person name="Camara F."/>
            <person name="Mar Alba M."/>
            <person name="Abril J.F."/>
            <person name="Guigo R."/>
            <person name="Smit A."/>
            <person name="Dubchak I."/>
            <person name="Rubin E.M."/>
            <person name="Couronne O."/>
            <person name="Poliakov A."/>
            <person name="Huebner N."/>
            <person name="Ganten D."/>
            <person name="Goesele C."/>
            <person name="Hummel O."/>
            <person name="Kreitler T."/>
            <person name="Lee Y.-A."/>
            <person name="Monti J."/>
            <person name="Schulz H."/>
            <person name="Zimdahl H."/>
            <person name="Himmelbauer H."/>
            <person name="Lehrach H."/>
            <person name="Jacob H.J."/>
            <person name="Bromberg S."/>
            <person name="Gullings-Handley J."/>
            <person name="Jensen-Seaman M.I."/>
            <person name="Kwitek A.E."/>
            <person name="Lazar J."/>
            <person name="Pasko D."/>
            <person name="Tonellato P.J."/>
            <person name="Twigger S."/>
            <person name="Ponting C.P."/>
            <person name="Duarte J.M."/>
            <person name="Rice S."/>
            <person name="Goodstadt L."/>
            <person name="Beatson S.A."/>
            <person name="Emes R.D."/>
            <person name="Winter E.E."/>
            <person name="Webber C."/>
            <person name="Brandt P."/>
            <person name="Nyakatura G."/>
            <person name="Adetobi M."/>
            <person name="Chiaromonte F."/>
            <person name="Elnitski L."/>
            <person name="Eswara P."/>
            <person name="Hardison R.C."/>
            <person name="Hou M."/>
            <person name="Kolbe D."/>
            <person name="Makova K."/>
            <person name="Miller W."/>
            <person name="Nekrutenko A."/>
            <person name="Riemer C."/>
            <person name="Schwartz S."/>
            <person name="Taylor J."/>
            <person name="Yang S."/>
            <person name="Zhang Y."/>
            <person name="Lindpaintner K."/>
            <person name="Andrews T.D."/>
            <person name="Caccamo M."/>
            <person name="Clamp M."/>
            <person name="Clarke L."/>
            <person name="Curwen V."/>
            <person name="Durbin R.M."/>
            <person name="Eyras E."/>
            <person name="Searle S.M."/>
            <person name="Cooper G.M."/>
            <person name="Batzoglou S."/>
            <person name="Brudno M."/>
            <person name="Sidow A."/>
            <person name="Stone E.A."/>
            <person name="Payseur B.A."/>
            <person name="Bourque G."/>
            <person name="Lopez-Otin C."/>
            <person name="Puente X.S."/>
            <person name="Chakrabarti K."/>
            <person name="Chatterji S."/>
            <person name="Dewey C."/>
            <person name="Pachter L."/>
            <person name="Bray N."/>
            <person name="Yap V.B."/>
            <person name="Caspi A."/>
            <person name="Tesler G."/>
            <person name="Pevzner P.A."/>
            <person name="Haussler D."/>
            <person name="Roskin K.M."/>
            <person name="Baertsch R."/>
            <person name="Clawson H."/>
            <person name="Furey T.S."/>
            <person name="Hinrichs A.S."/>
            <person name="Karolchik D."/>
            <person name="Kent W.J."/>
            <person name="Rosenbloom K.R."/>
            <person name="Trumbower H."/>
            <person name="Weirauch M."/>
            <person name="Cooper D.N."/>
            <person name="Stenson P.D."/>
            <person name="Ma B."/>
            <person name="Brent M."/>
            <person name="Arumugam M."/>
            <person name="Shteynberg D."/>
            <person name="Copley R.R."/>
            <person name="Taylor M.S."/>
            <person name="Riethman H."/>
            <person name="Mudunuri U."/>
            <person name="Peterson J."/>
            <person name="Guyer M."/>
            <person name="Felsenfeld A."/>
            <person name="Old S."/>
            <person name="Mockrin S."/>
            <person name="Collins F.S."/>
        </authorList>
    </citation>
    <scope>NUCLEOTIDE SEQUENCE [LARGE SCALE GENOMIC DNA]</scope>
    <source>
        <strain>Brown Norway</strain>
    </source>
</reference>
<evidence type="ECO:0000250" key="1">
    <source>
        <dbReference type="UniProtKB" id="P0A6F3"/>
    </source>
</evidence>
<evidence type="ECO:0000250" key="2">
    <source>
        <dbReference type="UniProtKB" id="P32189"/>
    </source>
</evidence>
<evidence type="ECO:0000255" key="3"/>
<evidence type="ECO:0000269" key="4">
    <source>
    </source>
</evidence>
<evidence type="ECO:0000303" key="5">
    <source>
    </source>
</evidence>
<evidence type="ECO:0000305" key="6"/>
<evidence type="ECO:0000312" key="7">
    <source>
        <dbReference type="RGD" id="70893"/>
    </source>
</evidence>
<proteinExistence type="evidence at transcript level"/>
<organism>
    <name type="scientific">Rattus norvegicus</name>
    <name type="common">Rat</name>
    <dbReference type="NCBI Taxonomy" id="10116"/>
    <lineage>
        <taxon>Eukaryota</taxon>
        <taxon>Metazoa</taxon>
        <taxon>Chordata</taxon>
        <taxon>Craniata</taxon>
        <taxon>Vertebrata</taxon>
        <taxon>Euteleostomi</taxon>
        <taxon>Mammalia</taxon>
        <taxon>Eutheria</taxon>
        <taxon>Euarchontoglires</taxon>
        <taxon>Glires</taxon>
        <taxon>Rodentia</taxon>
        <taxon>Myomorpha</taxon>
        <taxon>Muroidea</taxon>
        <taxon>Muridae</taxon>
        <taxon>Murinae</taxon>
        <taxon>Rattus</taxon>
    </lineage>
</organism>
<protein>
    <recommendedName>
        <fullName evidence="6">Glycerol kinase</fullName>
        <shortName>Glycerokinase</shortName>
        <ecNumber evidence="2">2.7.1.30</ecNumber>
    </recommendedName>
    <alternativeName>
        <fullName evidence="5">ATP-stimulated glucocorticoid-receptor translocation promoter</fullName>
        <shortName evidence="5">ASTP</shortName>
    </alternativeName>
    <alternativeName>
        <fullName evidence="2">ATP:glycerol 3-phosphotransferase</fullName>
    </alternativeName>
</protein>
<accession>Q63060</accession>
<accession>A0A0G2K785</accession>